<feature type="signal peptide" evidence="2">
    <location>
        <begin position="1"/>
        <end position="21"/>
    </location>
</feature>
<feature type="chain" id="PRO_0000004689" description="Catalase">
    <location>
        <begin position="22"/>
        <end position="503"/>
    </location>
</feature>
<feature type="active site" evidence="3">
    <location>
        <position position="72"/>
    </location>
</feature>
<feature type="active site" evidence="3">
    <location>
        <position position="145"/>
    </location>
</feature>
<feature type="binding site" description="axial binding residue" evidence="1">
    <location>
        <position position="353"/>
    </location>
    <ligand>
        <name>heme</name>
        <dbReference type="ChEBI" id="CHEBI:30413"/>
    </ligand>
    <ligandPart>
        <name>Fe</name>
        <dbReference type="ChEBI" id="CHEBI:18248"/>
    </ligandPart>
</feature>
<sequence length="503" mass="56552">MHMSKSFLIISMGFVAVSVQAQTLTRDNGAPVGDNQNSITAGEHGSVLLQDVHLIQKLQRFARERIPERVVHARGTGAHGEFVASGDFSDLTLSAPFTSKGKITPVFVRFSTVIHSKGSPETLRDPRGFATKFYTEQGNWDLVGNNLPVFFIRDSIKFPDMVHSLKPSPVTNLQDPNRFFDFFSHEPGSTHMLTWVYTNLGTPASYRTMDGFGVHAYKWINQKGDVNYVKFHWKSLQGIESLRPDEVVKVQGQDFNHLTNDLYTQINAGNHPKWDLYVQVLTPEQLSKLDYNGLDATKVWLDVPEKKVGTMTLNKVPDNFFLETEQSAFAPSNLIPGIEPSEDRLLQGRLFAYADTQLYRLGANLFQLPINRPLVEVNSHNQEGASNSAQTASDINYQPSRKLELKEDPQFKAVQTQLVGSVQQKAISNPRNFYQAGVLYRSLNEQDKQDLITNLXGBLNKVTDKEIKATMVSHFYRADKDYGTRLARATNTDLKQVAKLAAM</sequence>
<protein>
    <recommendedName>
        <fullName>Catalase</fullName>
        <ecNumber>1.11.1.6</ecNumber>
    </recommendedName>
</protein>
<comment type="function">
    <text evidence="1">Decomposes hydrogen peroxide into water and oxygen; serves to protect cells from the toxic effects of hydrogen peroxide.</text>
</comment>
<comment type="catalytic activity">
    <reaction evidence="3">
        <text>2 H2O2 = O2 + 2 H2O</text>
        <dbReference type="Rhea" id="RHEA:20309"/>
        <dbReference type="ChEBI" id="CHEBI:15377"/>
        <dbReference type="ChEBI" id="CHEBI:15379"/>
        <dbReference type="ChEBI" id="CHEBI:16240"/>
        <dbReference type="EC" id="1.11.1.6"/>
    </reaction>
</comment>
<comment type="cofactor">
    <cofactor evidence="1">
        <name>heme</name>
        <dbReference type="ChEBI" id="CHEBI:30413"/>
    </cofactor>
</comment>
<comment type="subcellular location">
    <subcellularLocation>
        <location evidence="4">Periplasm</location>
    </subcellularLocation>
</comment>
<comment type="similarity">
    <text evidence="4">Belongs to the catalase family.</text>
</comment>
<comment type="sequence caution" evidence="4">
    <conflict type="erroneous initiation">
        <sequence resource="EMBL-CDS" id="AAF94739"/>
    </conflict>
</comment>
<proteinExistence type="inferred from homology"/>
<reference key="1">
    <citation type="journal article" date="2000" name="Nature">
        <title>DNA sequence of both chromosomes of the cholera pathogen Vibrio cholerae.</title>
        <authorList>
            <person name="Heidelberg J.F."/>
            <person name="Eisen J.A."/>
            <person name="Nelson W.C."/>
            <person name="Clayton R.A."/>
            <person name="Gwinn M.L."/>
            <person name="Dodson R.J."/>
            <person name="Haft D.H."/>
            <person name="Hickey E.K."/>
            <person name="Peterson J.D."/>
            <person name="Umayam L.A."/>
            <person name="Gill S.R."/>
            <person name="Nelson K.E."/>
            <person name="Read T.D."/>
            <person name="Tettelin H."/>
            <person name="Richardson D.L."/>
            <person name="Ermolaeva M.D."/>
            <person name="Vamathevan J.J."/>
            <person name="Bass S."/>
            <person name="Qin H."/>
            <person name="Dragoi I."/>
            <person name="Sellers P."/>
            <person name="McDonald L.A."/>
            <person name="Utterback T.R."/>
            <person name="Fleischmann R.D."/>
            <person name="Nierman W.C."/>
            <person name="White O."/>
            <person name="Salzberg S.L."/>
            <person name="Smith H.O."/>
            <person name="Colwell R.R."/>
            <person name="Mekalanos J.J."/>
            <person name="Venter J.C."/>
            <person name="Fraser C.M."/>
        </authorList>
    </citation>
    <scope>NUCLEOTIDE SEQUENCE [LARGE SCALE GENOMIC DNA]</scope>
    <source>
        <strain>ATCC 39315 / El Tor Inaba N16961</strain>
    </source>
</reference>
<evidence type="ECO:0000250" key="1"/>
<evidence type="ECO:0000255" key="2"/>
<evidence type="ECO:0000255" key="3">
    <source>
        <dbReference type="PROSITE-ProRule" id="PRU10013"/>
    </source>
</evidence>
<evidence type="ECO:0000305" key="4"/>
<dbReference type="EC" id="1.11.1.6"/>
<dbReference type="EMBL" id="AE003852">
    <property type="protein sequence ID" value="AAF94739.2"/>
    <property type="status" value="ALT_INIT"/>
    <property type="molecule type" value="Genomic_DNA"/>
</dbReference>
<dbReference type="PIR" id="C82183">
    <property type="entry name" value="C82183"/>
</dbReference>
<dbReference type="RefSeq" id="NP_231225.2">
    <property type="nucleotide sequence ID" value="NC_002505.1"/>
</dbReference>
<dbReference type="RefSeq" id="WP_000551119.1">
    <property type="nucleotide sequence ID" value="NC_002505.1"/>
</dbReference>
<dbReference type="STRING" id="243277.VC_1585"/>
<dbReference type="DNASU" id="2613839"/>
<dbReference type="EnsemblBacteria" id="AAF94739">
    <property type="protein sequence ID" value="AAF94739"/>
    <property type="gene ID" value="VC_1585"/>
</dbReference>
<dbReference type="KEGG" id="vch:VC_1585"/>
<dbReference type="PATRIC" id="fig|243277.26.peg.1512"/>
<dbReference type="eggNOG" id="COG0753">
    <property type="taxonomic scope" value="Bacteria"/>
</dbReference>
<dbReference type="HOGENOM" id="CLU_010645_4_0_6"/>
<dbReference type="Proteomes" id="UP000000584">
    <property type="component" value="Chromosome 1"/>
</dbReference>
<dbReference type="GO" id="GO:0005737">
    <property type="term" value="C:cytoplasm"/>
    <property type="evidence" value="ECO:0000318"/>
    <property type="project" value="GO_Central"/>
</dbReference>
<dbReference type="GO" id="GO:0042597">
    <property type="term" value="C:periplasmic space"/>
    <property type="evidence" value="ECO:0007669"/>
    <property type="project" value="UniProtKB-SubCell"/>
</dbReference>
<dbReference type="GO" id="GO:0004096">
    <property type="term" value="F:catalase activity"/>
    <property type="evidence" value="ECO:0000318"/>
    <property type="project" value="GO_Central"/>
</dbReference>
<dbReference type="GO" id="GO:0020037">
    <property type="term" value="F:heme binding"/>
    <property type="evidence" value="ECO:0000318"/>
    <property type="project" value="GO_Central"/>
</dbReference>
<dbReference type="GO" id="GO:0046872">
    <property type="term" value="F:metal ion binding"/>
    <property type="evidence" value="ECO:0007669"/>
    <property type="project" value="UniProtKB-KW"/>
</dbReference>
<dbReference type="GO" id="GO:0042744">
    <property type="term" value="P:hydrogen peroxide catabolic process"/>
    <property type="evidence" value="ECO:0000318"/>
    <property type="project" value="GO_Central"/>
</dbReference>
<dbReference type="GO" id="GO:0042542">
    <property type="term" value="P:response to hydrogen peroxide"/>
    <property type="evidence" value="ECO:0000318"/>
    <property type="project" value="GO_Central"/>
</dbReference>
<dbReference type="CDD" id="cd08154">
    <property type="entry name" value="catalase_clade_1"/>
    <property type="match status" value="1"/>
</dbReference>
<dbReference type="FunFam" id="2.40.180.10:FF:000002">
    <property type="entry name" value="Catalase"/>
    <property type="match status" value="1"/>
</dbReference>
<dbReference type="Gene3D" id="2.40.180.10">
    <property type="entry name" value="Catalase core domain"/>
    <property type="match status" value="1"/>
</dbReference>
<dbReference type="InterPro" id="IPR018028">
    <property type="entry name" value="Catalase"/>
</dbReference>
<dbReference type="InterPro" id="IPR024708">
    <property type="entry name" value="Catalase_AS"/>
</dbReference>
<dbReference type="InterPro" id="IPR024711">
    <property type="entry name" value="Catalase_clade1/3"/>
</dbReference>
<dbReference type="InterPro" id="IPR011614">
    <property type="entry name" value="Catalase_core"/>
</dbReference>
<dbReference type="InterPro" id="IPR002226">
    <property type="entry name" value="Catalase_haem_BS"/>
</dbReference>
<dbReference type="InterPro" id="IPR010582">
    <property type="entry name" value="Catalase_immune_responsive"/>
</dbReference>
<dbReference type="InterPro" id="IPR020835">
    <property type="entry name" value="Catalase_sf"/>
</dbReference>
<dbReference type="PANTHER" id="PTHR11465">
    <property type="entry name" value="CATALASE"/>
    <property type="match status" value="1"/>
</dbReference>
<dbReference type="PANTHER" id="PTHR11465:SF23">
    <property type="entry name" value="CATALASE-2"/>
    <property type="match status" value="1"/>
</dbReference>
<dbReference type="Pfam" id="PF00199">
    <property type="entry name" value="Catalase"/>
    <property type="match status" value="1"/>
</dbReference>
<dbReference type="Pfam" id="PF06628">
    <property type="entry name" value="Catalase-rel"/>
    <property type="match status" value="1"/>
</dbReference>
<dbReference type="PIRSF" id="PIRSF038928">
    <property type="entry name" value="Catalase_clade1-3"/>
    <property type="match status" value="1"/>
</dbReference>
<dbReference type="PRINTS" id="PR00067">
    <property type="entry name" value="CATALASE"/>
</dbReference>
<dbReference type="SMART" id="SM01060">
    <property type="entry name" value="Catalase"/>
    <property type="match status" value="1"/>
</dbReference>
<dbReference type="SUPFAM" id="SSF56634">
    <property type="entry name" value="Heme-dependent catalase-like"/>
    <property type="match status" value="1"/>
</dbReference>
<dbReference type="PROSITE" id="PS00437">
    <property type="entry name" value="CATALASE_1"/>
    <property type="match status" value="1"/>
</dbReference>
<dbReference type="PROSITE" id="PS00438">
    <property type="entry name" value="CATALASE_2"/>
    <property type="match status" value="1"/>
</dbReference>
<dbReference type="PROSITE" id="PS51402">
    <property type="entry name" value="CATALASE_3"/>
    <property type="match status" value="1"/>
</dbReference>
<gene>
    <name type="ordered locus">VC_1585</name>
</gene>
<organism>
    <name type="scientific">Vibrio cholerae serotype O1 (strain ATCC 39315 / El Tor Inaba N16961)</name>
    <dbReference type="NCBI Taxonomy" id="243277"/>
    <lineage>
        <taxon>Bacteria</taxon>
        <taxon>Pseudomonadati</taxon>
        <taxon>Pseudomonadota</taxon>
        <taxon>Gammaproteobacteria</taxon>
        <taxon>Vibrionales</taxon>
        <taxon>Vibrionaceae</taxon>
        <taxon>Vibrio</taxon>
    </lineage>
</organism>
<accession>Q9KRQ1</accession>
<name>CATA_VIBCH</name>
<keyword id="KW-0349">Heme</keyword>
<keyword id="KW-0376">Hydrogen peroxide</keyword>
<keyword id="KW-0408">Iron</keyword>
<keyword id="KW-0479">Metal-binding</keyword>
<keyword id="KW-0560">Oxidoreductase</keyword>
<keyword id="KW-0574">Periplasm</keyword>
<keyword id="KW-0575">Peroxidase</keyword>
<keyword id="KW-1185">Reference proteome</keyword>
<keyword id="KW-0732">Signal</keyword>